<keyword id="KW-0408">Iron</keyword>
<keyword id="KW-0411">Iron-sulfur</keyword>
<keyword id="KW-0479">Metal-binding</keyword>
<keyword id="KW-1185">Reference proteome</keyword>
<name>ERPA_BAUCH</name>
<organism>
    <name type="scientific">Baumannia cicadellinicola subsp. Homalodisca coagulata</name>
    <dbReference type="NCBI Taxonomy" id="374463"/>
    <lineage>
        <taxon>Bacteria</taxon>
        <taxon>Pseudomonadati</taxon>
        <taxon>Pseudomonadota</taxon>
        <taxon>Gammaproteobacteria</taxon>
        <taxon>Candidatus Palibaumannia</taxon>
    </lineage>
</organism>
<comment type="function">
    <text evidence="1">Required for insertion of 4Fe-4S clusters for at least IspG.</text>
</comment>
<comment type="cofactor">
    <cofactor evidence="1">
        <name>iron-sulfur cluster</name>
        <dbReference type="ChEBI" id="CHEBI:30408"/>
    </cofactor>
    <text evidence="1">Binds 1 iron-sulfur cluster per subunit.</text>
</comment>
<comment type="subunit">
    <text evidence="1">Homodimer.</text>
</comment>
<comment type="similarity">
    <text evidence="1">Belongs to the HesB/IscA family.</text>
</comment>
<evidence type="ECO:0000255" key="1">
    <source>
        <dbReference type="HAMAP-Rule" id="MF_01380"/>
    </source>
</evidence>
<gene>
    <name evidence="1" type="primary">erpA</name>
    <name type="ordered locus">BCI_0225</name>
</gene>
<reference key="1">
    <citation type="journal article" date="2006" name="PLoS Biol.">
        <title>Metabolic complementarity and genomics of the dual bacterial symbiosis of sharpshooters.</title>
        <authorList>
            <person name="Wu D."/>
            <person name="Daugherty S.C."/>
            <person name="Van Aken S.E."/>
            <person name="Pai G.H."/>
            <person name="Watkins K.L."/>
            <person name="Khouri H."/>
            <person name="Tallon L.J."/>
            <person name="Zaborsky J.M."/>
            <person name="Dunbar H.E."/>
            <person name="Tran P.L."/>
            <person name="Moran N.A."/>
            <person name="Eisen J.A."/>
        </authorList>
    </citation>
    <scope>NUCLEOTIDE SEQUENCE [LARGE SCALE GENOMIC DNA]</scope>
</reference>
<proteinExistence type="inferred from homology"/>
<feature type="chain" id="PRO_0000311446" description="Iron-sulfur cluster insertion protein ErpA">
    <location>
        <begin position="1"/>
        <end position="115"/>
    </location>
</feature>
<feature type="binding site" evidence="1">
    <location>
        <position position="42"/>
    </location>
    <ligand>
        <name>iron-sulfur cluster</name>
        <dbReference type="ChEBI" id="CHEBI:30408"/>
    </ligand>
</feature>
<feature type="binding site" evidence="1">
    <location>
        <position position="106"/>
    </location>
    <ligand>
        <name>iron-sulfur cluster</name>
        <dbReference type="ChEBI" id="CHEBI:30408"/>
    </ligand>
</feature>
<feature type="binding site" evidence="1">
    <location>
        <position position="108"/>
    </location>
    <ligand>
        <name>iron-sulfur cluster</name>
        <dbReference type="ChEBI" id="CHEBI:30408"/>
    </ligand>
</feature>
<accession>Q1LTN5</accession>
<protein>
    <recommendedName>
        <fullName evidence="1">Iron-sulfur cluster insertion protein ErpA</fullName>
    </recommendedName>
</protein>
<dbReference type="EMBL" id="CP000238">
    <property type="protein sequence ID" value="ABF14031.1"/>
    <property type="molecule type" value="Genomic_DNA"/>
</dbReference>
<dbReference type="RefSeq" id="WP_011520412.1">
    <property type="nucleotide sequence ID" value="NC_007984.1"/>
</dbReference>
<dbReference type="SMR" id="Q1LTN5"/>
<dbReference type="STRING" id="374463.BCI_0225"/>
<dbReference type="KEGG" id="bci:BCI_0225"/>
<dbReference type="HOGENOM" id="CLU_069054_5_3_6"/>
<dbReference type="OrthoDB" id="9801228at2"/>
<dbReference type="Proteomes" id="UP000002427">
    <property type="component" value="Chromosome"/>
</dbReference>
<dbReference type="GO" id="GO:0005829">
    <property type="term" value="C:cytosol"/>
    <property type="evidence" value="ECO:0007669"/>
    <property type="project" value="TreeGrafter"/>
</dbReference>
<dbReference type="GO" id="GO:0051537">
    <property type="term" value="F:2 iron, 2 sulfur cluster binding"/>
    <property type="evidence" value="ECO:0007669"/>
    <property type="project" value="UniProtKB-ARBA"/>
</dbReference>
<dbReference type="GO" id="GO:0051539">
    <property type="term" value="F:4 iron, 4 sulfur cluster binding"/>
    <property type="evidence" value="ECO:0007669"/>
    <property type="project" value="TreeGrafter"/>
</dbReference>
<dbReference type="GO" id="GO:0005506">
    <property type="term" value="F:iron ion binding"/>
    <property type="evidence" value="ECO:0007669"/>
    <property type="project" value="UniProtKB-UniRule"/>
</dbReference>
<dbReference type="GO" id="GO:0016226">
    <property type="term" value="P:iron-sulfur cluster assembly"/>
    <property type="evidence" value="ECO:0007669"/>
    <property type="project" value="UniProtKB-UniRule"/>
</dbReference>
<dbReference type="FunFam" id="2.60.300.12:FF:000002">
    <property type="entry name" value="Iron-sulfur cluster insertion protein ErpA"/>
    <property type="match status" value="1"/>
</dbReference>
<dbReference type="Gene3D" id="2.60.300.12">
    <property type="entry name" value="HesB-like domain"/>
    <property type="match status" value="1"/>
</dbReference>
<dbReference type="HAMAP" id="MF_01380">
    <property type="entry name" value="Fe_S_insert_ErpA"/>
    <property type="match status" value="1"/>
</dbReference>
<dbReference type="InterPro" id="IPR000361">
    <property type="entry name" value="FeS_biogenesis"/>
</dbReference>
<dbReference type="InterPro" id="IPR016092">
    <property type="entry name" value="FeS_cluster_insertion"/>
</dbReference>
<dbReference type="InterPro" id="IPR017870">
    <property type="entry name" value="FeS_cluster_insertion_CS"/>
</dbReference>
<dbReference type="InterPro" id="IPR023063">
    <property type="entry name" value="FeS_cluster_insertion_RrpA"/>
</dbReference>
<dbReference type="InterPro" id="IPR035903">
    <property type="entry name" value="HesB-like_dom_sf"/>
</dbReference>
<dbReference type="NCBIfam" id="TIGR00049">
    <property type="entry name" value="iron-sulfur cluster assembly accessory protein"/>
    <property type="match status" value="1"/>
</dbReference>
<dbReference type="NCBIfam" id="NF010147">
    <property type="entry name" value="PRK13623.1"/>
    <property type="match status" value="1"/>
</dbReference>
<dbReference type="PANTHER" id="PTHR43011">
    <property type="entry name" value="IRON-SULFUR CLUSTER ASSEMBLY 2 HOMOLOG, MITOCHONDRIAL"/>
    <property type="match status" value="1"/>
</dbReference>
<dbReference type="PANTHER" id="PTHR43011:SF1">
    <property type="entry name" value="IRON-SULFUR CLUSTER ASSEMBLY 2 HOMOLOG, MITOCHONDRIAL"/>
    <property type="match status" value="1"/>
</dbReference>
<dbReference type="Pfam" id="PF01521">
    <property type="entry name" value="Fe-S_biosyn"/>
    <property type="match status" value="1"/>
</dbReference>
<dbReference type="SUPFAM" id="SSF89360">
    <property type="entry name" value="HesB-like domain"/>
    <property type="match status" value="1"/>
</dbReference>
<dbReference type="PROSITE" id="PS01152">
    <property type="entry name" value="HESB"/>
    <property type="match status" value="1"/>
</dbReference>
<sequence length="115" mass="12702">MNEMIRFPLQLTDSAINRIKTLIAEEANPHLKFRVYITGGGCSGLQYGFTFDDKVNEEDIAIEKQGVVLIVDPISLQYLLGGLVDYSEGLKGSRFFIINPNVQTTCSCGSSFSMT</sequence>